<proteinExistence type="inferred from homology"/>
<comment type="function">
    <text evidence="1">Converts the D-glycero-beta-D-manno-heptose 1,7-bisphosphate intermediate into D-glycero-beta-D-manno-heptose 1-phosphate by removing the phosphate group at the C-7 position.</text>
</comment>
<comment type="catalytic activity">
    <reaction>
        <text>D-glycero-beta-D-manno-heptose 1,7-bisphosphate + H2O = D-glycero-beta-D-manno-heptose 1-phosphate + phosphate</text>
        <dbReference type="Rhea" id="RHEA:28518"/>
        <dbReference type="ChEBI" id="CHEBI:15377"/>
        <dbReference type="ChEBI" id="CHEBI:43474"/>
        <dbReference type="ChEBI" id="CHEBI:60208"/>
        <dbReference type="ChEBI" id="CHEBI:61593"/>
        <dbReference type="EC" id="3.1.3.82"/>
    </reaction>
</comment>
<comment type="cofactor">
    <cofactor evidence="1">
        <name>Mg(2+)</name>
        <dbReference type="ChEBI" id="CHEBI:18420"/>
    </cofactor>
</comment>
<comment type="cofactor">
    <cofactor evidence="1">
        <name>Zn(2+)</name>
        <dbReference type="ChEBI" id="CHEBI:29105"/>
    </cofactor>
</comment>
<comment type="pathway">
    <text>Nucleotide-sugar biosynthesis; ADP-L-glycero-beta-D-manno-heptose biosynthesis; ADP-L-glycero-beta-D-manno-heptose from D-glycero-beta-D-manno-heptose 7-phosphate: step 2/4.</text>
</comment>
<comment type="pathway">
    <text>Bacterial outer membrane biogenesis; LPS core biosynthesis.</text>
</comment>
<comment type="subunit">
    <text evidence="1">Monomer.</text>
</comment>
<comment type="subcellular location">
    <subcellularLocation>
        <location evidence="1">Cytoplasm</location>
    </subcellularLocation>
</comment>
<comment type="similarity">
    <text evidence="3">Belongs to the GmhB family.</text>
</comment>
<evidence type="ECO:0000250" key="1"/>
<evidence type="ECO:0000250" key="2">
    <source>
        <dbReference type="UniProtKB" id="Q7WG29"/>
    </source>
</evidence>
<evidence type="ECO:0000305" key="3"/>
<organism>
    <name type="scientific">Shigella flexneri</name>
    <dbReference type="NCBI Taxonomy" id="623"/>
    <lineage>
        <taxon>Bacteria</taxon>
        <taxon>Pseudomonadati</taxon>
        <taxon>Pseudomonadota</taxon>
        <taxon>Gammaproteobacteria</taxon>
        <taxon>Enterobacterales</taxon>
        <taxon>Enterobacteriaceae</taxon>
        <taxon>Shigella</taxon>
    </lineage>
</organism>
<gene>
    <name type="primary">gmhB</name>
    <name type="ordered locus">SF0191</name>
    <name type="ordered locus">S0193</name>
</gene>
<reference key="1">
    <citation type="journal article" date="2002" name="Nucleic Acids Res.">
        <title>Genome sequence of Shigella flexneri 2a: insights into pathogenicity through comparison with genomes of Escherichia coli K12 and O157.</title>
        <authorList>
            <person name="Jin Q."/>
            <person name="Yuan Z."/>
            <person name="Xu J."/>
            <person name="Wang Y."/>
            <person name="Shen Y."/>
            <person name="Lu W."/>
            <person name="Wang J."/>
            <person name="Liu H."/>
            <person name="Yang J."/>
            <person name="Yang F."/>
            <person name="Zhang X."/>
            <person name="Zhang J."/>
            <person name="Yang G."/>
            <person name="Wu H."/>
            <person name="Qu D."/>
            <person name="Dong J."/>
            <person name="Sun L."/>
            <person name="Xue Y."/>
            <person name="Zhao A."/>
            <person name="Gao Y."/>
            <person name="Zhu J."/>
            <person name="Kan B."/>
            <person name="Ding K."/>
            <person name="Chen S."/>
            <person name="Cheng H."/>
            <person name="Yao Z."/>
            <person name="He B."/>
            <person name="Chen R."/>
            <person name="Ma D."/>
            <person name="Qiang B."/>
            <person name="Wen Y."/>
            <person name="Hou Y."/>
            <person name="Yu J."/>
        </authorList>
    </citation>
    <scope>NUCLEOTIDE SEQUENCE [LARGE SCALE GENOMIC DNA]</scope>
    <source>
        <strain>301 / Serotype 2a</strain>
    </source>
</reference>
<reference key="2">
    <citation type="journal article" date="2003" name="Infect. Immun.">
        <title>Complete genome sequence and comparative genomics of Shigella flexneri serotype 2a strain 2457T.</title>
        <authorList>
            <person name="Wei J."/>
            <person name="Goldberg M.B."/>
            <person name="Burland V."/>
            <person name="Venkatesan M.M."/>
            <person name="Deng W."/>
            <person name="Fournier G."/>
            <person name="Mayhew G.F."/>
            <person name="Plunkett G. III"/>
            <person name="Rose D.J."/>
            <person name="Darling A."/>
            <person name="Mau B."/>
            <person name="Perna N.T."/>
            <person name="Payne S.M."/>
            <person name="Runyen-Janecky L.J."/>
            <person name="Zhou S."/>
            <person name="Schwartz D.C."/>
            <person name="Blattner F.R."/>
        </authorList>
    </citation>
    <scope>NUCLEOTIDE SEQUENCE [LARGE SCALE GENOMIC DNA]</scope>
    <source>
        <strain>ATCC 700930 / 2457T / Serotype 2a</strain>
    </source>
</reference>
<keyword id="KW-0119">Carbohydrate metabolism</keyword>
<keyword id="KW-0963">Cytoplasm</keyword>
<keyword id="KW-0378">Hydrolase</keyword>
<keyword id="KW-0448">Lipopolysaccharide biosynthesis</keyword>
<keyword id="KW-0460">Magnesium</keyword>
<keyword id="KW-0479">Metal-binding</keyword>
<keyword id="KW-1185">Reference proteome</keyword>
<keyword id="KW-0862">Zinc</keyword>
<feature type="chain" id="PRO_0000209406" description="D-glycero-beta-D-manno-heptose-1,7-bisphosphate 7-phosphatase">
    <location>
        <begin position="1"/>
        <end position="191"/>
    </location>
</feature>
<feature type="active site" description="Nucleophile" evidence="1">
    <location>
        <position position="11"/>
    </location>
</feature>
<feature type="active site" description="Proton donor" evidence="1">
    <location>
        <position position="13"/>
    </location>
</feature>
<feature type="binding site" evidence="1">
    <location>
        <begin position="11"/>
        <end position="13"/>
    </location>
    <ligand>
        <name>substrate</name>
    </ligand>
</feature>
<feature type="binding site" evidence="1">
    <location>
        <position position="11"/>
    </location>
    <ligand>
        <name>Mg(2+)</name>
        <dbReference type="ChEBI" id="CHEBI:18420"/>
    </ligand>
</feature>
<feature type="binding site" evidence="1">
    <location>
        <position position="13"/>
    </location>
    <ligand>
        <name>Mg(2+)</name>
        <dbReference type="ChEBI" id="CHEBI:18420"/>
    </ligand>
</feature>
<feature type="binding site" evidence="1">
    <location>
        <begin position="19"/>
        <end position="22"/>
    </location>
    <ligand>
        <name>substrate</name>
    </ligand>
</feature>
<feature type="binding site" evidence="1">
    <location>
        <begin position="53"/>
        <end position="56"/>
    </location>
    <ligand>
        <name>substrate</name>
    </ligand>
</feature>
<feature type="binding site" evidence="2">
    <location>
        <position position="92"/>
    </location>
    <ligand>
        <name>Zn(2+)</name>
        <dbReference type="ChEBI" id="CHEBI:29105"/>
    </ligand>
</feature>
<feature type="binding site" evidence="2">
    <location>
        <position position="94"/>
    </location>
    <ligand>
        <name>Zn(2+)</name>
        <dbReference type="ChEBI" id="CHEBI:29105"/>
    </ligand>
</feature>
<feature type="binding site" evidence="2">
    <location>
        <position position="107"/>
    </location>
    <ligand>
        <name>Zn(2+)</name>
        <dbReference type="ChEBI" id="CHEBI:29105"/>
    </ligand>
</feature>
<feature type="binding site" evidence="2">
    <location>
        <position position="109"/>
    </location>
    <ligand>
        <name>Zn(2+)</name>
        <dbReference type="ChEBI" id="CHEBI:29105"/>
    </ligand>
</feature>
<feature type="binding site" evidence="1">
    <location>
        <begin position="110"/>
        <end position="111"/>
    </location>
    <ligand>
        <name>substrate</name>
    </ligand>
</feature>
<feature type="binding site" evidence="1">
    <location>
        <position position="136"/>
    </location>
    <ligand>
        <name>Mg(2+)</name>
        <dbReference type="ChEBI" id="CHEBI:18420"/>
    </ligand>
</feature>
<feature type="binding site" evidence="1">
    <location>
        <position position="137"/>
    </location>
    <ligand>
        <name>Mg(2+)</name>
        <dbReference type="ChEBI" id="CHEBI:18420"/>
    </ligand>
</feature>
<feature type="binding site" evidence="1">
    <location>
        <position position="137"/>
    </location>
    <ligand>
        <name>substrate</name>
    </ligand>
</feature>
<feature type="site" description="Stabilizes the phosphoryl group" evidence="1">
    <location>
        <position position="53"/>
    </location>
</feature>
<feature type="site" description="Contributes to substrate recognition" evidence="1">
    <location>
        <position position="110"/>
    </location>
</feature>
<feature type="site" description="Stabilizes the phosphoryl group" evidence="1">
    <location>
        <position position="111"/>
    </location>
</feature>
<sequence>MAKSVPAIFLDRDGTINVDHGYVHEIDNFEFIDGVIDAMRELKKMGFALVVVTNQSGIARGKFTEAQFETLTEWMDWSLADRDVDLDGIYYCPHHPQGSVEEFRQVCDCRKPHPGMLLSARDYLHIDMAASYMVGDKLEDMQAAVAANVGTKVLVRTGKPITPEAENAADWVLNSLADLPQAIKKQQKPAQ</sequence>
<accession>P63230</accession>
<accession>P31546</accession>
<protein>
    <recommendedName>
        <fullName>D-glycero-beta-D-manno-heptose-1,7-bisphosphate 7-phosphatase</fullName>
        <ecNumber>3.1.3.82</ecNumber>
    </recommendedName>
    <alternativeName>
        <fullName>D,D-heptose 1,7-bisphosphate phosphatase</fullName>
        <shortName>HBP phosphatase</shortName>
    </alternativeName>
</protein>
<name>GMHBB_SHIFL</name>
<dbReference type="EC" id="3.1.3.82"/>
<dbReference type="EMBL" id="AE005674">
    <property type="protein sequence ID" value="AAN41853.1"/>
    <property type="molecule type" value="Genomic_DNA"/>
</dbReference>
<dbReference type="EMBL" id="AE014073">
    <property type="protein sequence ID" value="AAP15733.1"/>
    <property type="molecule type" value="Genomic_DNA"/>
</dbReference>
<dbReference type="RefSeq" id="WP_001140187.1">
    <property type="nucleotide sequence ID" value="NZ_WPGW01000006.1"/>
</dbReference>
<dbReference type="SMR" id="P63230"/>
<dbReference type="STRING" id="198214.SF0191"/>
<dbReference type="PaxDb" id="198214-SF0191"/>
<dbReference type="GeneID" id="93777223"/>
<dbReference type="KEGG" id="sfl:SF0191"/>
<dbReference type="KEGG" id="sfx:S0193"/>
<dbReference type="PATRIC" id="fig|198214.7.peg.214"/>
<dbReference type="HOGENOM" id="CLU_085077_3_0_6"/>
<dbReference type="UniPathway" id="UPA00356">
    <property type="reaction ID" value="UER00438"/>
</dbReference>
<dbReference type="UniPathway" id="UPA00958"/>
<dbReference type="Proteomes" id="UP000001006">
    <property type="component" value="Chromosome"/>
</dbReference>
<dbReference type="Proteomes" id="UP000002673">
    <property type="component" value="Chromosome"/>
</dbReference>
<dbReference type="GO" id="GO:0005737">
    <property type="term" value="C:cytoplasm"/>
    <property type="evidence" value="ECO:0007669"/>
    <property type="project" value="UniProtKB-SubCell"/>
</dbReference>
<dbReference type="GO" id="GO:0034200">
    <property type="term" value="F:D-glycero-beta-D-manno-heptose 1,7-bisphosphate 7-phosphatase activity"/>
    <property type="evidence" value="ECO:0000250"/>
    <property type="project" value="UniProtKB"/>
</dbReference>
<dbReference type="GO" id="GO:0000287">
    <property type="term" value="F:magnesium ion binding"/>
    <property type="evidence" value="ECO:0000250"/>
    <property type="project" value="UniProtKB"/>
</dbReference>
<dbReference type="GO" id="GO:0008270">
    <property type="term" value="F:zinc ion binding"/>
    <property type="evidence" value="ECO:0000250"/>
    <property type="project" value="UniProtKB"/>
</dbReference>
<dbReference type="GO" id="GO:0097171">
    <property type="term" value="P:ADP-L-glycero-beta-D-manno-heptose biosynthetic process"/>
    <property type="evidence" value="ECO:0007669"/>
    <property type="project" value="UniProtKB-UniPathway"/>
</dbReference>
<dbReference type="GO" id="GO:0009244">
    <property type="term" value="P:lipopolysaccharide core region biosynthetic process"/>
    <property type="evidence" value="ECO:0007669"/>
    <property type="project" value="UniProtKB-UniPathway"/>
</dbReference>
<dbReference type="CDD" id="cd07503">
    <property type="entry name" value="HAD_HisB-N"/>
    <property type="match status" value="1"/>
</dbReference>
<dbReference type="FunFam" id="3.40.50.1000:FF:000037">
    <property type="entry name" value="D,D-heptose 1,7-bisphosphate phosphatase"/>
    <property type="match status" value="1"/>
</dbReference>
<dbReference type="Gene3D" id="3.40.50.1000">
    <property type="entry name" value="HAD superfamily/HAD-like"/>
    <property type="match status" value="1"/>
</dbReference>
<dbReference type="InterPro" id="IPR036412">
    <property type="entry name" value="HAD-like_sf"/>
</dbReference>
<dbReference type="InterPro" id="IPR006549">
    <property type="entry name" value="HAD-SF_hydro_IIIA"/>
</dbReference>
<dbReference type="InterPro" id="IPR023214">
    <property type="entry name" value="HAD_sf"/>
</dbReference>
<dbReference type="InterPro" id="IPR004446">
    <property type="entry name" value="Heptose_bisP_phosphatase"/>
</dbReference>
<dbReference type="InterPro" id="IPR006543">
    <property type="entry name" value="Histidinol-phos"/>
</dbReference>
<dbReference type="NCBIfam" id="TIGR00213">
    <property type="entry name" value="GmhB_yaeD"/>
    <property type="match status" value="1"/>
</dbReference>
<dbReference type="NCBIfam" id="TIGR01662">
    <property type="entry name" value="HAD-SF-IIIA"/>
    <property type="match status" value="1"/>
</dbReference>
<dbReference type="NCBIfam" id="TIGR01656">
    <property type="entry name" value="Histidinol-ppas"/>
    <property type="match status" value="1"/>
</dbReference>
<dbReference type="NCBIfam" id="NF006506">
    <property type="entry name" value="PRK08942.1"/>
    <property type="match status" value="1"/>
</dbReference>
<dbReference type="PANTHER" id="PTHR42891">
    <property type="entry name" value="D-GLYCERO-BETA-D-MANNO-HEPTOSE-1,7-BISPHOSPHATE 7-PHOSPHATASE"/>
    <property type="match status" value="1"/>
</dbReference>
<dbReference type="PANTHER" id="PTHR42891:SF1">
    <property type="entry name" value="D-GLYCERO-BETA-D-MANNO-HEPTOSE-1,7-BISPHOSPHATE 7-PHOSPHATASE"/>
    <property type="match status" value="1"/>
</dbReference>
<dbReference type="Pfam" id="PF13242">
    <property type="entry name" value="Hydrolase_like"/>
    <property type="match status" value="1"/>
</dbReference>
<dbReference type="PIRSF" id="PIRSF004682">
    <property type="entry name" value="GmhB"/>
    <property type="match status" value="1"/>
</dbReference>
<dbReference type="SFLD" id="SFLDG01134">
    <property type="entry name" value="C1.5.5:_Heptose_Bisphosphate_P"/>
    <property type="match status" value="1"/>
</dbReference>
<dbReference type="SFLD" id="SFLDS00003">
    <property type="entry name" value="Haloacid_Dehalogenase"/>
    <property type="match status" value="1"/>
</dbReference>
<dbReference type="SUPFAM" id="SSF56784">
    <property type="entry name" value="HAD-like"/>
    <property type="match status" value="1"/>
</dbReference>